<proteinExistence type="evidence at protein level"/>
<feature type="chain" id="PRO_0000205498" description="Coenzyme gamma-F420-2:alpha-L-glutamate ligase">
    <location>
        <begin position="1"/>
        <end position="288"/>
    </location>
</feature>
<feature type="domain" description="ATP-grasp" evidence="2">
    <location>
        <begin position="101"/>
        <end position="287"/>
    </location>
</feature>
<feature type="binding site" evidence="1">
    <location>
        <position position="139"/>
    </location>
    <ligand>
        <name>ATP</name>
        <dbReference type="ChEBI" id="CHEBI:30616"/>
    </ligand>
</feature>
<feature type="binding site" evidence="2">
    <location>
        <begin position="173"/>
        <end position="186"/>
    </location>
    <ligand>
        <name>ATP</name>
        <dbReference type="ChEBI" id="CHEBI:30616"/>
    </ligand>
</feature>
<feature type="binding site" evidence="1">
    <location>
        <position position="202"/>
    </location>
    <ligand>
        <name>ATP</name>
        <dbReference type="ChEBI" id="CHEBI:30616"/>
    </ligand>
</feature>
<feature type="binding site" evidence="1">
    <location>
        <position position="245"/>
    </location>
    <ligand>
        <name>Mn(2+)</name>
        <dbReference type="ChEBI" id="CHEBI:29035"/>
        <label>1</label>
    </ligand>
</feature>
<feature type="binding site" evidence="1">
    <location>
        <position position="257"/>
    </location>
    <ligand>
        <name>Mn(2+)</name>
        <dbReference type="ChEBI" id="CHEBI:29035"/>
        <label>1</label>
    </ligand>
</feature>
<feature type="binding site" evidence="1">
    <location>
        <position position="257"/>
    </location>
    <ligand>
        <name>Mn(2+)</name>
        <dbReference type="ChEBI" id="CHEBI:29035"/>
        <label>2</label>
    </ligand>
</feature>
<feature type="binding site" evidence="1">
    <location>
        <position position="259"/>
    </location>
    <ligand>
        <name>Mn(2+)</name>
        <dbReference type="ChEBI" id="CHEBI:29035"/>
        <label>2</label>
    </ligand>
</feature>
<keyword id="KW-0067">ATP-binding</keyword>
<keyword id="KW-0436">Ligase</keyword>
<keyword id="KW-0464">Manganese</keyword>
<keyword id="KW-0479">Metal-binding</keyword>
<keyword id="KW-0547">Nucleotide-binding</keyword>
<keyword id="KW-1185">Reference proteome</keyword>
<reference key="1">
    <citation type="journal article" date="1996" name="Science">
        <title>Complete genome sequence of the methanogenic archaeon, Methanococcus jannaschii.</title>
        <authorList>
            <person name="Bult C.J."/>
            <person name="White O."/>
            <person name="Olsen G.J."/>
            <person name="Zhou L."/>
            <person name="Fleischmann R.D."/>
            <person name="Sutton G.G."/>
            <person name="Blake J.A."/>
            <person name="FitzGerald L.M."/>
            <person name="Clayton R.A."/>
            <person name="Gocayne J.D."/>
            <person name="Kerlavage A.R."/>
            <person name="Dougherty B.A."/>
            <person name="Tomb J.-F."/>
            <person name="Adams M.D."/>
            <person name="Reich C.I."/>
            <person name="Overbeek R."/>
            <person name="Kirkness E.F."/>
            <person name="Weinstock K.G."/>
            <person name="Merrick J.M."/>
            <person name="Glodek A."/>
            <person name="Scott J.L."/>
            <person name="Geoghagen N.S.M."/>
            <person name="Weidman J.F."/>
            <person name="Fuhrmann J.L."/>
            <person name="Nguyen D."/>
            <person name="Utterback T.R."/>
            <person name="Kelley J.M."/>
            <person name="Peterson J.D."/>
            <person name="Sadow P.W."/>
            <person name="Hanna M.C."/>
            <person name="Cotton M.D."/>
            <person name="Roberts K.M."/>
            <person name="Hurst M.A."/>
            <person name="Kaine B.P."/>
            <person name="Borodovsky M."/>
            <person name="Klenk H.-P."/>
            <person name="Fraser C.M."/>
            <person name="Smith H.O."/>
            <person name="Woese C.R."/>
            <person name="Venter J.C."/>
        </authorList>
    </citation>
    <scope>NUCLEOTIDE SEQUENCE [LARGE SCALE GENOMIC DNA]</scope>
    <source>
        <strain>ATCC 43067 / DSM 2661 / JAL-1 / JCM 10045 / NBRC 100440</strain>
    </source>
</reference>
<reference key="2">
    <citation type="journal article" date="2003" name="Proc. Natl. Acad. Sci. U.S.A.">
        <title>Glutathione synthetase homologs encode alpha-L-glutamate ligases for methanogenic coenzyme F420 and tetrahydrosarcinapterin biosyntheses.</title>
        <authorList>
            <person name="Li H."/>
            <person name="Xu H."/>
            <person name="Graham D.E."/>
            <person name="White R.H."/>
        </authorList>
    </citation>
    <scope>FUNCTION</scope>
    <scope>CATALYTIC ACTIVITY</scope>
    <scope>SUBSTRATE SPECIFICITY</scope>
    <scope>COFACTOR</scope>
    <scope>ACTIVITY REGULATION</scope>
    <scope>BIOPHYSICOCHEMICAL PROPERTIES</scope>
    <scope>SUBUNIT</scope>
    <source>
        <strain>ATCC 43067 / DSM 2661 / JAL-1 / JCM 10045 / NBRC 100440</strain>
    </source>
</reference>
<name>COFF_METJA</name>
<protein>
    <recommendedName>
        <fullName>Coenzyme gamma-F420-2:alpha-L-glutamate ligase</fullName>
        <ecNumber>6.3.2.32</ecNumber>
    </recommendedName>
</protein>
<organism>
    <name type="scientific">Methanocaldococcus jannaschii (strain ATCC 43067 / DSM 2661 / JAL-1 / JCM 10045 / NBRC 100440)</name>
    <name type="common">Methanococcus jannaschii</name>
    <dbReference type="NCBI Taxonomy" id="243232"/>
    <lineage>
        <taxon>Archaea</taxon>
        <taxon>Methanobacteriati</taxon>
        <taxon>Methanobacteriota</taxon>
        <taxon>Methanomada group</taxon>
        <taxon>Methanococci</taxon>
        <taxon>Methanococcales</taxon>
        <taxon>Methanocaldococcaceae</taxon>
        <taxon>Methanocaldococcus</taxon>
    </lineage>
</organism>
<sequence>MVKITILSPEGRSCSVWSLKNEIEKLGAKCDIFLLSSPENLMSHDFKLETDLIHSRCGIGDYFDRLTLYSWQFINALEVEGCRFINPIKTLYLTSDKFKCIKLLAKNKIKTPKTALIRDYEDAVKFIEKYNLRFPVVIKNSFSKCGLKVFMARNYDELKQLTKNAIWEGKLIQEFIDFKENDLYRDMRILVVDGEVVGGYRRVSRDFRTNLYLGNVVEKLNIDEELEELALKCADLSEAVILGVDILPTKDNYYVIELNSSPGTKGFRDIGINADKKIAEALVRYAKS</sequence>
<gene>
    <name type="primary">cofF</name>
    <name type="ordered locus">MJ1001</name>
</gene>
<comment type="function">
    <text evidence="3">Catalyzes the ATP-dependent addition of one alpha-linked L-glutamate molecule to coenzyme gamma-F420-2, producing alpha-F420-3, the major form of coenzyme F420 found in M.jannaschii. Thus, caps the gamma-polyglutamate tail of coenzyme F420 with a terminal alpha-linked glutamate. Prefers ATP to other purine nucleotide triphosphates; GTP gives about 25% of the activity observed with ATP. Cannot catalyze the addition of the following amino acids or analogs: D-glutamate, beta-glutamate, L-aspartate, L-glutamine, L-alpha-aminoadipate, or D,L-2-amino-4-phosphono-butyrate.</text>
</comment>
<comment type="catalytic activity">
    <reaction evidence="3">
        <text>oxidized coenzyme F420-2 + L-glutamate + ATP = oxidized coenzyme alpha-F420-3 + ADP + phosphate + H(+)</text>
        <dbReference type="Rhea" id="RHEA:42332"/>
        <dbReference type="ChEBI" id="CHEBI:15378"/>
        <dbReference type="ChEBI" id="CHEBI:29985"/>
        <dbReference type="ChEBI" id="CHEBI:30616"/>
        <dbReference type="ChEBI" id="CHEBI:43474"/>
        <dbReference type="ChEBI" id="CHEBI:57922"/>
        <dbReference type="ChEBI" id="CHEBI:59923"/>
        <dbReference type="ChEBI" id="CHEBI:456216"/>
        <dbReference type="EC" id="6.3.2.32"/>
    </reaction>
</comment>
<comment type="cofactor">
    <cofactor evidence="3">
        <name>Mn(2+)</name>
        <dbReference type="ChEBI" id="CHEBI:29035"/>
    </cofactor>
    <text evidence="3">Binds 2 manganese ions per subunit.</text>
</comment>
<comment type="activity regulation">
    <text evidence="3">Inhibited by KCl.</text>
</comment>
<comment type="biophysicochemical properties">
    <kinetics>
        <KM evidence="3">1.2 uM for coenzyme F420-2</KM>
        <Vmax evidence="3">0.72 nmol/min/mg enzyme</Vmax>
    </kinetics>
    <temperatureDependence>
        <text evidence="3">Thermostable.</text>
    </temperatureDependence>
</comment>
<comment type="pathway">
    <text>Cofactor biosynthesis; coenzyme F420 biosynthesis.</text>
</comment>
<comment type="subunit">
    <text evidence="3">Monomer.</text>
</comment>
<comment type="similarity">
    <text evidence="4">Belongs to the RimK family. CofF subfamily.</text>
</comment>
<comment type="sequence caution" evidence="4">
    <conflict type="erroneous initiation">
        <sequence resource="EMBL-CDS" id="AAB99004"/>
    </conflict>
</comment>
<evidence type="ECO:0000250" key="1"/>
<evidence type="ECO:0000255" key="2">
    <source>
        <dbReference type="PROSITE-ProRule" id="PRU00409"/>
    </source>
</evidence>
<evidence type="ECO:0000269" key="3">
    <source>
    </source>
</evidence>
<evidence type="ECO:0000305" key="4"/>
<dbReference type="EC" id="6.3.2.32"/>
<dbReference type="EMBL" id="L77117">
    <property type="protein sequence ID" value="AAB99004.1"/>
    <property type="status" value="ALT_INIT"/>
    <property type="molecule type" value="Genomic_DNA"/>
</dbReference>
<dbReference type="PIR" id="H64424">
    <property type="entry name" value="H64424"/>
</dbReference>
<dbReference type="RefSeq" id="WP_064496695.1">
    <property type="nucleotide sequence ID" value="NC_000909.1"/>
</dbReference>
<dbReference type="SMR" id="Q58407"/>
<dbReference type="FunCoup" id="Q58407">
    <property type="interactions" value="20"/>
</dbReference>
<dbReference type="STRING" id="243232.MJ_1001"/>
<dbReference type="PaxDb" id="243232-MJ_1001"/>
<dbReference type="EnsemblBacteria" id="AAB99004">
    <property type="protein sequence ID" value="AAB99004"/>
    <property type="gene ID" value="MJ_1001"/>
</dbReference>
<dbReference type="GeneID" id="1451898"/>
<dbReference type="KEGG" id="mja:MJ_1001"/>
<dbReference type="eggNOG" id="arCOG01589">
    <property type="taxonomic scope" value="Archaea"/>
</dbReference>
<dbReference type="HOGENOM" id="CLU_975255_0_0_2"/>
<dbReference type="InParanoid" id="Q58407"/>
<dbReference type="OrthoDB" id="33241at2157"/>
<dbReference type="PhylomeDB" id="Q58407"/>
<dbReference type="BioCyc" id="MetaCyc:MONOMER-12190"/>
<dbReference type="BRENDA" id="6.3.2.32">
    <property type="organism ID" value="3260"/>
</dbReference>
<dbReference type="SABIO-RK" id="Q58407"/>
<dbReference type="UniPathway" id="UPA00071"/>
<dbReference type="Proteomes" id="UP000000805">
    <property type="component" value="Chromosome"/>
</dbReference>
<dbReference type="GO" id="GO:0005737">
    <property type="term" value="C:cytoplasm"/>
    <property type="evidence" value="ECO:0000318"/>
    <property type="project" value="GO_Central"/>
</dbReference>
<dbReference type="GO" id="GO:0005524">
    <property type="term" value="F:ATP binding"/>
    <property type="evidence" value="ECO:0007669"/>
    <property type="project" value="UniProtKB-KW"/>
</dbReference>
<dbReference type="GO" id="GO:0043774">
    <property type="term" value="F:coenzyme F420-2 alpha-glutamyl ligase activity"/>
    <property type="evidence" value="ECO:0000314"/>
    <property type="project" value="MENGO"/>
</dbReference>
<dbReference type="GO" id="GO:0046872">
    <property type="term" value="F:metal ion binding"/>
    <property type="evidence" value="ECO:0007669"/>
    <property type="project" value="UniProtKB-KW"/>
</dbReference>
<dbReference type="GO" id="GO:0036211">
    <property type="term" value="P:protein modification process"/>
    <property type="evidence" value="ECO:0007669"/>
    <property type="project" value="InterPro"/>
</dbReference>
<dbReference type="FunFam" id="3.40.50.20:FF:000042">
    <property type="entry name" value="RimK-related lysine biosynthesis protein"/>
    <property type="match status" value="1"/>
</dbReference>
<dbReference type="Gene3D" id="3.40.50.20">
    <property type="match status" value="1"/>
</dbReference>
<dbReference type="Gene3D" id="3.30.1490.20">
    <property type="entry name" value="ATP-grasp fold, A domain"/>
    <property type="match status" value="1"/>
</dbReference>
<dbReference type="Gene3D" id="3.30.470.20">
    <property type="entry name" value="ATP-grasp fold, B domain"/>
    <property type="match status" value="1"/>
</dbReference>
<dbReference type="InterPro" id="IPR011761">
    <property type="entry name" value="ATP-grasp"/>
</dbReference>
<dbReference type="InterPro" id="IPR013651">
    <property type="entry name" value="ATP-grasp_RimK-type"/>
</dbReference>
<dbReference type="InterPro" id="IPR013815">
    <property type="entry name" value="ATP_grasp_subdomain_1"/>
</dbReference>
<dbReference type="InterPro" id="IPR031039">
    <property type="entry name" value="F420_CofF"/>
</dbReference>
<dbReference type="InterPro" id="IPR004666">
    <property type="entry name" value="Rp_bS6_RimK/Lys_biosynth_LsyX"/>
</dbReference>
<dbReference type="NCBIfam" id="TIGR04443">
    <property type="entry name" value="F420_CofF"/>
    <property type="match status" value="1"/>
</dbReference>
<dbReference type="NCBIfam" id="TIGR00768">
    <property type="entry name" value="rimK_fam"/>
    <property type="match status" value="1"/>
</dbReference>
<dbReference type="PANTHER" id="PTHR21621:SF2">
    <property type="entry name" value="COENZYME GAMMA-F420-2:ALPHA-L-GLUTAMATE LIGASE"/>
    <property type="match status" value="1"/>
</dbReference>
<dbReference type="PANTHER" id="PTHR21621">
    <property type="entry name" value="RIBOSOMAL PROTEIN S6 MODIFICATION PROTEIN"/>
    <property type="match status" value="1"/>
</dbReference>
<dbReference type="Pfam" id="PF08443">
    <property type="entry name" value="RimK"/>
    <property type="match status" value="1"/>
</dbReference>
<dbReference type="SUPFAM" id="SSF56059">
    <property type="entry name" value="Glutathione synthetase ATP-binding domain-like"/>
    <property type="match status" value="1"/>
</dbReference>
<dbReference type="PROSITE" id="PS50975">
    <property type="entry name" value="ATP_GRASP"/>
    <property type="match status" value="1"/>
</dbReference>
<accession>Q58407</accession>